<comment type="function">
    <text evidence="1 2 3">Catalyzes the sequential decarboxylation of the four acetate side chains of uroporphyrinogen to form coproporphyrinogen and participates in the fifth step in the heme biosynthetic pathway (PubMed:12297827). Isomer I or isomer III of uroporphyrinogen may serve as substrate, but only coproporphyrinogen III can ultimately be converted to heme (By similarity). In vitro also decarboxylates pentacarboxylate porphyrinogen I (PubMed:8661721).</text>
</comment>
<comment type="catalytic activity">
    <reaction evidence="1">
        <text>uroporphyrinogen III + 4 H(+) = coproporphyrinogen III + 4 CO2</text>
        <dbReference type="Rhea" id="RHEA:19865"/>
        <dbReference type="ChEBI" id="CHEBI:15378"/>
        <dbReference type="ChEBI" id="CHEBI:16526"/>
        <dbReference type="ChEBI" id="CHEBI:57308"/>
        <dbReference type="ChEBI" id="CHEBI:57309"/>
        <dbReference type="EC" id="4.1.1.37"/>
    </reaction>
    <physiologicalReaction direction="left-to-right" evidence="1">
        <dbReference type="Rhea" id="RHEA:19866"/>
    </physiologicalReaction>
</comment>
<comment type="catalytic activity">
    <reaction evidence="1">
        <text>uroporphyrinogen I + 4 H(+) = coproporphyrinogen I + 4 CO2</text>
        <dbReference type="Rhea" id="RHEA:31239"/>
        <dbReference type="ChEBI" id="CHEBI:15378"/>
        <dbReference type="ChEBI" id="CHEBI:16526"/>
        <dbReference type="ChEBI" id="CHEBI:62626"/>
        <dbReference type="ChEBI" id="CHEBI:62631"/>
    </reaction>
    <physiologicalReaction direction="left-to-right" evidence="1">
        <dbReference type="Rhea" id="RHEA:31240"/>
    </physiologicalReaction>
</comment>
<comment type="pathway">
    <text evidence="1">Porphyrin-containing compound metabolism; protoporphyrin-IX biosynthesis; coproporphyrinogen-III from 5-aminolevulinate: step 4/4.</text>
</comment>
<comment type="subunit">
    <text evidence="1">Homodimer.</text>
</comment>
<comment type="subcellular location">
    <subcellularLocation>
        <location evidence="2">Cytoplasm</location>
        <location evidence="2">Cytosol</location>
    </subcellularLocation>
</comment>
<comment type="similarity">
    <text evidence="4">Belongs to the uroporphyrinogen decarboxylase family.</text>
</comment>
<protein>
    <recommendedName>
        <fullName evidence="4">Uroporphyrinogen decarboxylase</fullName>
        <shortName>UPD</shortName>
        <shortName>URO-D</shortName>
        <ecNumber evidence="1">4.1.1.37</ecNumber>
    </recommendedName>
</protein>
<proteinExistence type="evidence at protein level"/>
<gene>
    <name evidence="5" type="primary">Urod</name>
</gene>
<name>DCUP_MOUSE</name>
<organism>
    <name type="scientific">Mus musculus</name>
    <name type="common">Mouse</name>
    <dbReference type="NCBI Taxonomy" id="10090"/>
    <lineage>
        <taxon>Eukaryota</taxon>
        <taxon>Metazoa</taxon>
        <taxon>Chordata</taxon>
        <taxon>Craniata</taxon>
        <taxon>Vertebrata</taxon>
        <taxon>Euteleostomi</taxon>
        <taxon>Mammalia</taxon>
        <taxon>Eutheria</taxon>
        <taxon>Euarchontoglires</taxon>
        <taxon>Glires</taxon>
        <taxon>Rodentia</taxon>
        <taxon>Myomorpha</taxon>
        <taxon>Muroidea</taxon>
        <taxon>Muridae</taxon>
        <taxon>Murinae</taxon>
        <taxon>Mus</taxon>
        <taxon>Mus</taxon>
    </lineage>
</organism>
<reference key="1">
    <citation type="journal article" date="1996" name="Mamm. Genome">
        <title>Mouse uroporphyrinogen decarboxylase: cDNA cloning, expression, and mapping.</title>
        <authorList>
            <person name="Wu C."/>
            <person name="Xu W."/>
            <person name="Kozak C.A."/>
            <person name="Desnick R.J."/>
        </authorList>
    </citation>
    <scope>NUCLEOTIDE SEQUENCE [MRNA]</scope>
    <scope>FUNCTION</scope>
    <source>
        <strain>C57BL/6 X CBA</strain>
    </source>
</reference>
<reference key="2">
    <citation type="journal article" date="2005" name="Science">
        <title>The transcriptional landscape of the mammalian genome.</title>
        <authorList>
            <person name="Carninci P."/>
            <person name="Kasukawa T."/>
            <person name="Katayama S."/>
            <person name="Gough J."/>
            <person name="Frith M.C."/>
            <person name="Maeda N."/>
            <person name="Oyama R."/>
            <person name="Ravasi T."/>
            <person name="Lenhard B."/>
            <person name="Wells C."/>
            <person name="Kodzius R."/>
            <person name="Shimokawa K."/>
            <person name="Bajic V.B."/>
            <person name="Brenner S.E."/>
            <person name="Batalov S."/>
            <person name="Forrest A.R."/>
            <person name="Zavolan M."/>
            <person name="Davis M.J."/>
            <person name="Wilming L.G."/>
            <person name="Aidinis V."/>
            <person name="Allen J.E."/>
            <person name="Ambesi-Impiombato A."/>
            <person name="Apweiler R."/>
            <person name="Aturaliya R.N."/>
            <person name="Bailey T.L."/>
            <person name="Bansal M."/>
            <person name="Baxter L."/>
            <person name="Beisel K.W."/>
            <person name="Bersano T."/>
            <person name="Bono H."/>
            <person name="Chalk A.M."/>
            <person name="Chiu K.P."/>
            <person name="Choudhary V."/>
            <person name="Christoffels A."/>
            <person name="Clutterbuck D.R."/>
            <person name="Crowe M.L."/>
            <person name="Dalla E."/>
            <person name="Dalrymple B.P."/>
            <person name="de Bono B."/>
            <person name="Della Gatta G."/>
            <person name="di Bernardo D."/>
            <person name="Down T."/>
            <person name="Engstrom P."/>
            <person name="Fagiolini M."/>
            <person name="Faulkner G."/>
            <person name="Fletcher C.F."/>
            <person name="Fukushima T."/>
            <person name="Furuno M."/>
            <person name="Futaki S."/>
            <person name="Gariboldi M."/>
            <person name="Georgii-Hemming P."/>
            <person name="Gingeras T.R."/>
            <person name="Gojobori T."/>
            <person name="Green R.E."/>
            <person name="Gustincich S."/>
            <person name="Harbers M."/>
            <person name="Hayashi Y."/>
            <person name="Hensch T.K."/>
            <person name="Hirokawa N."/>
            <person name="Hill D."/>
            <person name="Huminiecki L."/>
            <person name="Iacono M."/>
            <person name="Ikeo K."/>
            <person name="Iwama A."/>
            <person name="Ishikawa T."/>
            <person name="Jakt M."/>
            <person name="Kanapin A."/>
            <person name="Katoh M."/>
            <person name="Kawasawa Y."/>
            <person name="Kelso J."/>
            <person name="Kitamura H."/>
            <person name="Kitano H."/>
            <person name="Kollias G."/>
            <person name="Krishnan S.P."/>
            <person name="Kruger A."/>
            <person name="Kummerfeld S.K."/>
            <person name="Kurochkin I.V."/>
            <person name="Lareau L.F."/>
            <person name="Lazarevic D."/>
            <person name="Lipovich L."/>
            <person name="Liu J."/>
            <person name="Liuni S."/>
            <person name="McWilliam S."/>
            <person name="Madan Babu M."/>
            <person name="Madera M."/>
            <person name="Marchionni L."/>
            <person name="Matsuda H."/>
            <person name="Matsuzawa S."/>
            <person name="Miki H."/>
            <person name="Mignone F."/>
            <person name="Miyake S."/>
            <person name="Morris K."/>
            <person name="Mottagui-Tabar S."/>
            <person name="Mulder N."/>
            <person name="Nakano N."/>
            <person name="Nakauchi H."/>
            <person name="Ng P."/>
            <person name="Nilsson R."/>
            <person name="Nishiguchi S."/>
            <person name="Nishikawa S."/>
            <person name="Nori F."/>
            <person name="Ohara O."/>
            <person name="Okazaki Y."/>
            <person name="Orlando V."/>
            <person name="Pang K.C."/>
            <person name="Pavan W.J."/>
            <person name="Pavesi G."/>
            <person name="Pesole G."/>
            <person name="Petrovsky N."/>
            <person name="Piazza S."/>
            <person name="Reed J."/>
            <person name="Reid J.F."/>
            <person name="Ring B.Z."/>
            <person name="Ringwald M."/>
            <person name="Rost B."/>
            <person name="Ruan Y."/>
            <person name="Salzberg S.L."/>
            <person name="Sandelin A."/>
            <person name="Schneider C."/>
            <person name="Schoenbach C."/>
            <person name="Sekiguchi K."/>
            <person name="Semple C.A."/>
            <person name="Seno S."/>
            <person name="Sessa L."/>
            <person name="Sheng Y."/>
            <person name="Shibata Y."/>
            <person name="Shimada H."/>
            <person name="Shimada K."/>
            <person name="Silva D."/>
            <person name="Sinclair B."/>
            <person name="Sperling S."/>
            <person name="Stupka E."/>
            <person name="Sugiura K."/>
            <person name="Sultana R."/>
            <person name="Takenaka Y."/>
            <person name="Taki K."/>
            <person name="Tammoja K."/>
            <person name="Tan S.L."/>
            <person name="Tang S."/>
            <person name="Taylor M.S."/>
            <person name="Tegner J."/>
            <person name="Teichmann S.A."/>
            <person name="Ueda H.R."/>
            <person name="van Nimwegen E."/>
            <person name="Verardo R."/>
            <person name="Wei C.L."/>
            <person name="Yagi K."/>
            <person name="Yamanishi H."/>
            <person name="Zabarovsky E."/>
            <person name="Zhu S."/>
            <person name="Zimmer A."/>
            <person name="Hide W."/>
            <person name="Bult C."/>
            <person name="Grimmond S.M."/>
            <person name="Teasdale R.D."/>
            <person name="Liu E.T."/>
            <person name="Brusic V."/>
            <person name="Quackenbush J."/>
            <person name="Wahlestedt C."/>
            <person name="Mattick J.S."/>
            <person name="Hume D.A."/>
            <person name="Kai C."/>
            <person name="Sasaki D."/>
            <person name="Tomaru Y."/>
            <person name="Fukuda S."/>
            <person name="Kanamori-Katayama M."/>
            <person name="Suzuki M."/>
            <person name="Aoki J."/>
            <person name="Arakawa T."/>
            <person name="Iida J."/>
            <person name="Imamura K."/>
            <person name="Itoh M."/>
            <person name="Kato T."/>
            <person name="Kawaji H."/>
            <person name="Kawagashira N."/>
            <person name="Kawashima T."/>
            <person name="Kojima M."/>
            <person name="Kondo S."/>
            <person name="Konno H."/>
            <person name="Nakano K."/>
            <person name="Ninomiya N."/>
            <person name="Nishio T."/>
            <person name="Okada M."/>
            <person name="Plessy C."/>
            <person name="Shibata K."/>
            <person name="Shiraki T."/>
            <person name="Suzuki S."/>
            <person name="Tagami M."/>
            <person name="Waki K."/>
            <person name="Watahiki A."/>
            <person name="Okamura-Oho Y."/>
            <person name="Suzuki H."/>
            <person name="Kawai J."/>
            <person name="Hayashizaki Y."/>
        </authorList>
    </citation>
    <scope>NUCLEOTIDE SEQUENCE [LARGE SCALE MRNA]</scope>
    <scope>CATALYTIC ACTIVITY</scope>
    <source>
        <strain>NOD</strain>
        <tissue>Spleen</tissue>
    </source>
</reference>
<reference key="3">
    <citation type="journal article" date="2009" name="PLoS Biol.">
        <title>Lineage-specific biology revealed by a finished genome assembly of the mouse.</title>
        <authorList>
            <person name="Church D.M."/>
            <person name="Goodstadt L."/>
            <person name="Hillier L.W."/>
            <person name="Zody M.C."/>
            <person name="Goldstein S."/>
            <person name="She X."/>
            <person name="Bult C.J."/>
            <person name="Agarwala R."/>
            <person name="Cherry J.L."/>
            <person name="DiCuccio M."/>
            <person name="Hlavina W."/>
            <person name="Kapustin Y."/>
            <person name="Meric P."/>
            <person name="Maglott D."/>
            <person name="Birtle Z."/>
            <person name="Marques A.C."/>
            <person name="Graves T."/>
            <person name="Zhou S."/>
            <person name="Teague B."/>
            <person name="Potamousis K."/>
            <person name="Churas C."/>
            <person name="Place M."/>
            <person name="Herschleb J."/>
            <person name="Runnheim R."/>
            <person name="Forrest D."/>
            <person name="Amos-Landgraf J."/>
            <person name="Schwartz D.C."/>
            <person name="Cheng Z."/>
            <person name="Lindblad-Toh K."/>
            <person name="Eichler E.E."/>
            <person name="Ponting C.P."/>
        </authorList>
    </citation>
    <scope>NUCLEOTIDE SEQUENCE [LARGE SCALE GENOMIC DNA]</scope>
    <source>
        <strain>C57BL/6J</strain>
    </source>
</reference>
<reference key="4">
    <citation type="journal article" date="2004" name="Genome Res.">
        <title>The status, quality, and expansion of the NIH full-length cDNA project: the Mammalian Gene Collection (MGC).</title>
        <authorList>
            <consortium name="The MGC Project Team"/>
        </authorList>
    </citation>
    <scope>NUCLEOTIDE SEQUENCE [LARGE SCALE MRNA]</scope>
    <source>
        <strain>FVB/N</strain>
        <tissue>Mammary tumor</tissue>
    </source>
</reference>
<reference key="5">
    <citation type="submission" date="2009-01" db="UniProtKB">
        <authorList>
            <person name="Lubec G."/>
            <person name="Sunyer B."/>
            <person name="Chen W.-Q."/>
        </authorList>
    </citation>
    <scope>PROTEIN SEQUENCE OF 51-74; 105-116; 121-142; 232-238; 251-263 AND 298-359</scope>
    <scope>IDENTIFICATION BY MASS SPECTROMETRY</scope>
    <source>
        <strain>OF1</strain>
        <tissue>Hippocampus</tissue>
    </source>
</reference>
<reference key="6">
    <citation type="journal article" date="2002" name="Hepatology">
        <title>Uroporphyria in the uroporphyrinogen decarboxylase-deficient mouse: Interplay with siderosis and polychlorinated biphenyl exposure.</title>
        <authorList>
            <person name="Franklin M.R."/>
            <person name="Phillips J.D."/>
            <person name="Kushner J.P."/>
        </authorList>
    </citation>
    <scope>FUNCTION</scope>
    <scope>SUBCELLULAR LOCATION</scope>
</reference>
<reference key="7">
    <citation type="journal article" date="2010" name="Cell">
        <title>A tissue-specific atlas of mouse protein phosphorylation and expression.</title>
        <authorList>
            <person name="Huttlin E.L."/>
            <person name="Jedrychowski M.P."/>
            <person name="Elias J.E."/>
            <person name="Goswami T."/>
            <person name="Rad R."/>
            <person name="Beausoleil S.A."/>
            <person name="Villen J."/>
            <person name="Haas W."/>
            <person name="Sowa M.E."/>
            <person name="Gygi S.P."/>
        </authorList>
    </citation>
    <scope>IDENTIFICATION BY MASS SPECTROMETRY [LARGE SCALE ANALYSIS]</scope>
    <source>
        <tissue>Brain</tissue>
        <tissue>Brown adipose tissue</tissue>
        <tissue>Heart</tissue>
        <tissue>Kidney</tissue>
        <tissue>Liver</tissue>
        <tissue>Lung</tissue>
        <tissue>Pancreas</tissue>
        <tissue>Spleen</tissue>
        <tissue>Testis</tissue>
    </source>
</reference>
<dbReference type="EC" id="4.1.1.37" evidence="1"/>
<dbReference type="EMBL" id="U34691">
    <property type="protein sequence ID" value="AAB18294.1"/>
    <property type="molecule type" value="mRNA"/>
</dbReference>
<dbReference type="EMBL" id="AK172426">
    <property type="protein sequence ID" value="BAE43002.1"/>
    <property type="molecule type" value="mRNA"/>
</dbReference>
<dbReference type="EMBL" id="AL671671">
    <property type="status" value="NOT_ANNOTATED_CDS"/>
    <property type="molecule type" value="Genomic_DNA"/>
</dbReference>
<dbReference type="EMBL" id="BC008109">
    <property type="protein sequence ID" value="AAH08109.1"/>
    <property type="molecule type" value="mRNA"/>
</dbReference>
<dbReference type="CCDS" id="CCDS18521.1"/>
<dbReference type="PIR" id="T10088">
    <property type="entry name" value="T10088"/>
</dbReference>
<dbReference type="RefSeq" id="NP_033504.2">
    <property type="nucleotide sequence ID" value="NM_009478.5"/>
</dbReference>
<dbReference type="SMR" id="P70697"/>
<dbReference type="BioGRID" id="204461">
    <property type="interactions" value="4"/>
</dbReference>
<dbReference type="FunCoup" id="P70697">
    <property type="interactions" value="2086"/>
</dbReference>
<dbReference type="IntAct" id="P70697">
    <property type="interactions" value="1"/>
</dbReference>
<dbReference type="STRING" id="10090.ENSMUSP00000030446"/>
<dbReference type="GlyGen" id="P70697">
    <property type="glycosylation" value="1 site, 1 O-linked glycan (1 site)"/>
</dbReference>
<dbReference type="iPTMnet" id="P70697"/>
<dbReference type="PhosphoSitePlus" id="P70697"/>
<dbReference type="SwissPalm" id="P70697"/>
<dbReference type="jPOST" id="P70697"/>
<dbReference type="PaxDb" id="10090-ENSMUSP00000030446"/>
<dbReference type="PeptideAtlas" id="P70697"/>
<dbReference type="ProteomicsDB" id="279607"/>
<dbReference type="Pumba" id="P70697"/>
<dbReference type="Antibodypedia" id="18538">
    <property type="antibodies" value="244 antibodies from 31 providers"/>
</dbReference>
<dbReference type="DNASU" id="22275"/>
<dbReference type="Ensembl" id="ENSMUST00000030446.15">
    <property type="protein sequence ID" value="ENSMUSP00000030446.9"/>
    <property type="gene ID" value="ENSMUSG00000028684.15"/>
</dbReference>
<dbReference type="GeneID" id="22275"/>
<dbReference type="KEGG" id="mmu:22275"/>
<dbReference type="UCSC" id="uc008uhr.1">
    <property type="organism name" value="mouse"/>
</dbReference>
<dbReference type="AGR" id="MGI:98916"/>
<dbReference type="CTD" id="7389"/>
<dbReference type="MGI" id="MGI:98916">
    <property type="gene designation" value="Urod"/>
</dbReference>
<dbReference type="VEuPathDB" id="HostDB:ENSMUSG00000028684"/>
<dbReference type="eggNOG" id="KOG2872">
    <property type="taxonomic scope" value="Eukaryota"/>
</dbReference>
<dbReference type="GeneTree" id="ENSGT00390000018302"/>
<dbReference type="HOGENOM" id="CLU_040933_0_0_1"/>
<dbReference type="InParanoid" id="P70697"/>
<dbReference type="OMA" id="LWLMRQA"/>
<dbReference type="OrthoDB" id="339900at2759"/>
<dbReference type="PhylomeDB" id="P70697"/>
<dbReference type="TreeFam" id="TF300744"/>
<dbReference type="BioCyc" id="MetaCyc:MONOMER-14921"/>
<dbReference type="Reactome" id="R-MMU-189451">
    <property type="pathway name" value="Heme biosynthesis"/>
</dbReference>
<dbReference type="UniPathway" id="UPA00251">
    <property type="reaction ID" value="UER00321"/>
</dbReference>
<dbReference type="BioGRID-ORCS" id="22275">
    <property type="hits" value="27 hits in 78 CRISPR screens"/>
</dbReference>
<dbReference type="ChiTaRS" id="Urod">
    <property type="organism name" value="mouse"/>
</dbReference>
<dbReference type="PRO" id="PR:P70697"/>
<dbReference type="Proteomes" id="UP000000589">
    <property type="component" value="Chromosome 4"/>
</dbReference>
<dbReference type="RNAct" id="P70697">
    <property type="molecule type" value="protein"/>
</dbReference>
<dbReference type="Bgee" id="ENSMUSG00000028684">
    <property type="expression patterns" value="Expressed in fetal liver hematopoietic progenitor cell and 271 other cell types or tissues"/>
</dbReference>
<dbReference type="ExpressionAtlas" id="P70697">
    <property type="expression patterns" value="baseline and differential"/>
</dbReference>
<dbReference type="GO" id="GO:0005829">
    <property type="term" value="C:cytosol"/>
    <property type="evidence" value="ECO:0000314"/>
    <property type="project" value="MGI"/>
</dbReference>
<dbReference type="GO" id="GO:0005654">
    <property type="term" value="C:nucleoplasm"/>
    <property type="evidence" value="ECO:0007669"/>
    <property type="project" value="Ensembl"/>
</dbReference>
<dbReference type="GO" id="GO:0004853">
    <property type="term" value="F:uroporphyrinogen decarboxylase activity"/>
    <property type="evidence" value="ECO:0000314"/>
    <property type="project" value="MGI"/>
</dbReference>
<dbReference type="GO" id="GO:0008283">
    <property type="term" value="P:cell population proliferation"/>
    <property type="evidence" value="ECO:0000250"/>
    <property type="project" value="MGI"/>
</dbReference>
<dbReference type="GO" id="GO:0006784">
    <property type="term" value="P:heme A biosynthetic process"/>
    <property type="evidence" value="ECO:0000315"/>
    <property type="project" value="MGI"/>
</dbReference>
<dbReference type="GO" id="GO:0006785">
    <property type="term" value="P:heme B biosynthetic process"/>
    <property type="evidence" value="ECO:0000315"/>
    <property type="project" value="MGI"/>
</dbReference>
<dbReference type="GO" id="GO:0006783">
    <property type="term" value="P:heme biosynthetic process"/>
    <property type="evidence" value="ECO:0000315"/>
    <property type="project" value="MGI"/>
</dbReference>
<dbReference type="GO" id="GO:0042168">
    <property type="term" value="P:heme metabolic process"/>
    <property type="evidence" value="ECO:0000315"/>
    <property type="project" value="MGI"/>
</dbReference>
<dbReference type="GO" id="GO:0048034">
    <property type="term" value="P:heme O biosynthetic process"/>
    <property type="evidence" value="ECO:0000315"/>
    <property type="project" value="MGI"/>
</dbReference>
<dbReference type="GO" id="GO:0006787">
    <property type="term" value="P:porphyrin-containing compound catabolic process"/>
    <property type="evidence" value="ECO:0000250"/>
    <property type="project" value="UniProtKB"/>
</dbReference>
<dbReference type="GO" id="GO:0006782">
    <property type="term" value="P:protoporphyrinogen IX biosynthetic process"/>
    <property type="evidence" value="ECO:0007669"/>
    <property type="project" value="UniProtKB-UniPathway"/>
</dbReference>
<dbReference type="CDD" id="cd00717">
    <property type="entry name" value="URO-D"/>
    <property type="match status" value="1"/>
</dbReference>
<dbReference type="FunFam" id="3.20.20.210:FF:000008">
    <property type="entry name" value="Uroporphyrinogen decarboxylase"/>
    <property type="match status" value="1"/>
</dbReference>
<dbReference type="Gene3D" id="3.20.20.210">
    <property type="match status" value="1"/>
</dbReference>
<dbReference type="HAMAP" id="MF_00218">
    <property type="entry name" value="URO_D"/>
    <property type="match status" value="1"/>
</dbReference>
<dbReference type="InterPro" id="IPR038071">
    <property type="entry name" value="UROD/MetE-like_sf"/>
</dbReference>
<dbReference type="InterPro" id="IPR006361">
    <property type="entry name" value="Uroporphyrinogen_deCO2ase_HemE"/>
</dbReference>
<dbReference type="InterPro" id="IPR000257">
    <property type="entry name" value="Uroporphyrinogen_deCOase"/>
</dbReference>
<dbReference type="NCBIfam" id="TIGR01464">
    <property type="entry name" value="hemE"/>
    <property type="match status" value="1"/>
</dbReference>
<dbReference type="PANTHER" id="PTHR21091">
    <property type="entry name" value="METHYLTETRAHYDROFOLATE:HOMOCYSTEINE METHYLTRANSFERASE RELATED"/>
    <property type="match status" value="1"/>
</dbReference>
<dbReference type="PANTHER" id="PTHR21091:SF169">
    <property type="entry name" value="UROPORPHYRINOGEN DECARBOXYLASE"/>
    <property type="match status" value="1"/>
</dbReference>
<dbReference type="Pfam" id="PF01208">
    <property type="entry name" value="URO-D"/>
    <property type="match status" value="1"/>
</dbReference>
<dbReference type="SUPFAM" id="SSF51726">
    <property type="entry name" value="UROD/MetE-like"/>
    <property type="match status" value="1"/>
</dbReference>
<dbReference type="PROSITE" id="PS00906">
    <property type="entry name" value="UROD_1"/>
    <property type="match status" value="1"/>
</dbReference>
<dbReference type="PROSITE" id="PS00907">
    <property type="entry name" value="UROD_2"/>
    <property type="match status" value="1"/>
</dbReference>
<feature type="chain" id="PRO_0000187570" description="Uroporphyrinogen decarboxylase">
    <location>
        <begin position="1"/>
        <end position="367"/>
    </location>
</feature>
<feature type="binding site" evidence="1">
    <location>
        <position position="37"/>
    </location>
    <ligand>
        <name>coproporphyrinogen I</name>
        <dbReference type="ChEBI" id="CHEBI:62631"/>
    </ligand>
</feature>
<feature type="binding site" evidence="1">
    <location>
        <position position="37"/>
    </location>
    <ligand>
        <name>coproporphyrinogen III</name>
        <dbReference type="ChEBI" id="CHEBI:57309"/>
    </ligand>
</feature>
<feature type="binding site" evidence="1">
    <location>
        <position position="39"/>
    </location>
    <ligand>
        <name>coproporphyrinogen I</name>
        <dbReference type="ChEBI" id="CHEBI:62631"/>
    </ligand>
</feature>
<feature type="binding site" evidence="1">
    <location>
        <position position="39"/>
    </location>
    <ligand>
        <name>coproporphyrinogen III</name>
        <dbReference type="ChEBI" id="CHEBI:57309"/>
    </ligand>
</feature>
<feature type="binding site" evidence="1">
    <location>
        <position position="41"/>
    </location>
    <ligand>
        <name>coproporphyrinogen I</name>
        <dbReference type="ChEBI" id="CHEBI:62631"/>
    </ligand>
</feature>
<feature type="binding site" evidence="1">
    <location>
        <position position="41"/>
    </location>
    <ligand>
        <name>coproporphyrinogen III</name>
        <dbReference type="ChEBI" id="CHEBI:57309"/>
    </ligand>
</feature>
<feature type="binding site" evidence="1">
    <location>
        <position position="50"/>
    </location>
    <ligand>
        <name>coproporphyrinogen I</name>
        <dbReference type="ChEBI" id="CHEBI:62631"/>
    </ligand>
</feature>
<feature type="binding site" evidence="1">
    <location>
        <position position="86"/>
    </location>
    <ligand>
        <name>coproporphyrinogen I</name>
        <dbReference type="ChEBI" id="CHEBI:62631"/>
    </ligand>
</feature>
<feature type="binding site" evidence="1">
    <location>
        <position position="86"/>
    </location>
    <ligand>
        <name>coproporphyrinogen III</name>
        <dbReference type="ChEBI" id="CHEBI:57309"/>
    </ligand>
</feature>
<feature type="binding site" evidence="1">
    <location>
        <position position="164"/>
    </location>
    <ligand>
        <name>coproporphyrinogen I</name>
        <dbReference type="ChEBI" id="CHEBI:62631"/>
    </ligand>
</feature>
<feature type="binding site" evidence="1">
    <location>
        <position position="164"/>
    </location>
    <ligand>
        <name>coproporphyrinogen III</name>
        <dbReference type="ChEBI" id="CHEBI:57309"/>
    </ligand>
</feature>
<feature type="binding site" evidence="1">
    <location>
        <position position="219"/>
    </location>
    <ligand>
        <name>coproporphyrinogen I</name>
        <dbReference type="ChEBI" id="CHEBI:62631"/>
    </ligand>
</feature>
<feature type="binding site" evidence="1">
    <location>
        <position position="219"/>
    </location>
    <ligand>
        <name>coproporphyrinogen III</name>
        <dbReference type="ChEBI" id="CHEBI:57309"/>
    </ligand>
</feature>
<feature type="binding site" evidence="1">
    <location>
        <position position="339"/>
    </location>
    <ligand>
        <name>coproporphyrinogen I</name>
        <dbReference type="ChEBI" id="CHEBI:62631"/>
    </ligand>
</feature>
<feature type="binding site" evidence="1">
    <location>
        <position position="339"/>
    </location>
    <ligand>
        <name>coproporphyrinogen III</name>
        <dbReference type="ChEBI" id="CHEBI:57309"/>
    </ligand>
</feature>
<feature type="site" description="Transition state stabilizer" evidence="1">
    <location>
        <position position="86"/>
    </location>
</feature>
<feature type="modified residue" description="N-acetylmethionine" evidence="1">
    <location>
        <position position="1"/>
    </location>
</feature>
<feature type="sequence conflict" description="In Ref. 1; AAB18294." evidence="4" ref="1">
    <original>M</original>
    <variation>I</variation>
    <location>
        <position position="96"/>
    </location>
</feature>
<feature type="sequence conflict" description="In Ref. 1; AAB18294." evidence="4" ref="1">
    <original>Y</original>
    <variation>S</variation>
    <location>
        <position position="333"/>
    </location>
</feature>
<sequence>MEANGFGLQNFPELKNDTFLRAAWGEETDYTPVWCMRQAGRYLPEFRETRAAQDFFSTCRSPEACCELTLQPLRRFPLDAAIIFSDILVVPQALGMEVTMVPGKGPSFPEPLREERDLERLRDPAAAASELGYVFQAITLTRQRLAGRVPLIGFAGAPWTLMTYMVEGGSSSTMAQAKRWLYQRPQASHKLLGILTDVLVPYLIGQVAAGAQALQLFESHAGHLGTELFSKFALPYIRDVAKRVKAGLQKAGLAPVPMIIFAKDGHFALEELAQAGYEVVGLDWTVAPKKARERVGKAVTLQGNLDPCALYASEEEIGRLVQQMLDDFGPQRYIANLGHGLYPDMDPERVGAFVDAVHKHSRLLRQN</sequence>
<accession>P70697</accession>
<accession>Q91VW4</accession>
<evidence type="ECO:0000250" key="1">
    <source>
        <dbReference type="UniProtKB" id="P06132"/>
    </source>
</evidence>
<evidence type="ECO:0000269" key="2">
    <source>
    </source>
</evidence>
<evidence type="ECO:0000269" key="3">
    <source>
    </source>
</evidence>
<evidence type="ECO:0000305" key="4"/>
<evidence type="ECO:0000312" key="5">
    <source>
        <dbReference type="MGI" id="MGI:98916"/>
    </source>
</evidence>
<keyword id="KW-0007">Acetylation</keyword>
<keyword id="KW-0963">Cytoplasm</keyword>
<keyword id="KW-0210">Decarboxylase</keyword>
<keyword id="KW-0903">Direct protein sequencing</keyword>
<keyword id="KW-0350">Heme biosynthesis</keyword>
<keyword id="KW-0456">Lyase</keyword>
<keyword id="KW-0627">Porphyrin biosynthesis</keyword>
<keyword id="KW-1185">Reference proteome</keyword>